<keyword id="KW-1003">Cell membrane</keyword>
<keyword id="KW-0472">Membrane</keyword>
<keyword id="KW-1185">Reference proteome</keyword>
<keyword id="KW-0812">Transmembrane</keyword>
<keyword id="KW-1133">Transmembrane helix</keyword>
<sequence length="155" mass="17855">MTFLFLILVFIIEILQLSVFPPIFGNAYIVPSLAFLLVLFSSYKIKEKALLLAFLSGLFYDAVVNFLGFISLLNVVFTYLYLVLNNILFVKNPKVEVFLIMPLILLLRKLTIFLVVNTKFPLNIGLKDFGVVLLIDLIFLILLYKVFNKYVYEKA</sequence>
<name>Y1188_AQUAE</name>
<accession>O67248</accession>
<feature type="chain" id="PRO_0000186909" description="Uncharacterized protein aq_1188">
    <location>
        <begin position="1"/>
        <end position="155"/>
    </location>
</feature>
<feature type="transmembrane region" description="Helical" evidence="1">
    <location>
        <begin position="2"/>
        <end position="24"/>
    </location>
</feature>
<feature type="transmembrane region" description="Helical" evidence="1">
    <location>
        <begin position="62"/>
        <end position="84"/>
    </location>
</feature>
<feature type="transmembrane region" description="Helical" evidence="1">
    <location>
        <begin position="97"/>
        <end position="116"/>
    </location>
</feature>
<feature type="transmembrane region" description="Helical" evidence="1">
    <location>
        <begin position="131"/>
        <end position="148"/>
    </location>
</feature>
<gene>
    <name type="ordered locus">aq_1188</name>
</gene>
<comment type="subcellular location">
    <subcellularLocation>
        <location evidence="2">Cell membrane</location>
        <topology evidence="2">Multi-pass membrane protein</topology>
    </subcellularLocation>
</comment>
<dbReference type="EMBL" id="AE000657">
    <property type="protein sequence ID" value="AAC07220.1"/>
    <property type="molecule type" value="Genomic_DNA"/>
</dbReference>
<dbReference type="PIR" id="E70402">
    <property type="entry name" value="E70402"/>
</dbReference>
<dbReference type="RefSeq" id="NP_213812.1">
    <property type="nucleotide sequence ID" value="NC_000918.1"/>
</dbReference>
<dbReference type="RefSeq" id="WP_010880750.1">
    <property type="nucleotide sequence ID" value="NC_000918.1"/>
</dbReference>
<dbReference type="STRING" id="224324.aq_1188"/>
<dbReference type="EnsemblBacteria" id="AAC07220">
    <property type="protein sequence ID" value="AAC07220"/>
    <property type="gene ID" value="aq_1188"/>
</dbReference>
<dbReference type="KEGG" id="aae:aq_1188"/>
<dbReference type="HOGENOM" id="CLU_1691872_0_0_0"/>
<dbReference type="InParanoid" id="O67248"/>
<dbReference type="Proteomes" id="UP000000798">
    <property type="component" value="Chromosome"/>
</dbReference>
<dbReference type="GO" id="GO:0005886">
    <property type="term" value="C:plasma membrane"/>
    <property type="evidence" value="ECO:0007669"/>
    <property type="project" value="UniProtKB-SubCell"/>
</dbReference>
<reference key="1">
    <citation type="journal article" date="1998" name="Nature">
        <title>The complete genome of the hyperthermophilic bacterium Aquifex aeolicus.</title>
        <authorList>
            <person name="Deckert G."/>
            <person name="Warren P.V."/>
            <person name="Gaasterland T."/>
            <person name="Young W.G."/>
            <person name="Lenox A.L."/>
            <person name="Graham D.E."/>
            <person name="Overbeek R."/>
            <person name="Snead M.A."/>
            <person name="Keller M."/>
            <person name="Aujay M."/>
            <person name="Huber R."/>
            <person name="Feldman R.A."/>
            <person name="Short J.M."/>
            <person name="Olsen G.J."/>
            <person name="Swanson R.V."/>
        </authorList>
    </citation>
    <scope>NUCLEOTIDE SEQUENCE [LARGE SCALE GENOMIC DNA]</scope>
    <source>
        <strain>VF5</strain>
    </source>
</reference>
<protein>
    <recommendedName>
        <fullName>Uncharacterized protein aq_1188</fullName>
    </recommendedName>
</protein>
<evidence type="ECO:0000255" key="1"/>
<evidence type="ECO:0000305" key="2"/>
<organism>
    <name type="scientific">Aquifex aeolicus (strain VF5)</name>
    <dbReference type="NCBI Taxonomy" id="224324"/>
    <lineage>
        <taxon>Bacteria</taxon>
        <taxon>Pseudomonadati</taxon>
        <taxon>Aquificota</taxon>
        <taxon>Aquificia</taxon>
        <taxon>Aquificales</taxon>
        <taxon>Aquificaceae</taxon>
        <taxon>Aquifex</taxon>
    </lineage>
</organism>
<proteinExistence type="predicted"/>